<evidence type="ECO:0000255" key="1">
    <source>
        <dbReference type="HAMAP-Rule" id="MF_00108"/>
    </source>
</evidence>
<comment type="function">
    <text evidence="1">Catalyzes the formation of 4-diphosphocytidyl-2-C-methyl-D-erythritol from CTP and 2-C-methyl-D-erythritol 4-phosphate (MEP).</text>
</comment>
<comment type="catalytic activity">
    <reaction evidence="1">
        <text>2-C-methyl-D-erythritol 4-phosphate + CTP + H(+) = 4-CDP-2-C-methyl-D-erythritol + diphosphate</text>
        <dbReference type="Rhea" id="RHEA:13429"/>
        <dbReference type="ChEBI" id="CHEBI:15378"/>
        <dbReference type="ChEBI" id="CHEBI:33019"/>
        <dbReference type="ChEBI" id="CHEBI:37563"/>
        <dbReference type="ChEBI" id="CHEBI:57823"/>
        <dbReference type="ChEBI" id="CHEBI:58262"/>
        <dbReference type="EC" id="2.7.7.60"/>
    </reaction>
</comment>
<comment type="pathway">
    <text evidence="1">Isoprenoid biosynthesis; isopentenyl diphosphate biosynthesis via DXP pathway; isopentenyl diphosphate from 1-deoxy-D-xylulose 5-phosphate: step 2/6.</text>
</comment>
<comment type="similarity">
    <text evidence="1">Belongs to the IspD/TarI cytidylyltransferase family. IspD subfamily.</text>
</comment>
<keyword id="KW-0414">Isoprene biosynthesis</keyword>
<keyword id="KW-0548">Nucleotidyltransferase</keyword>
<keyword id="KW-1185">Reference proteome</keyword>
<keyword id="KW-0808">Transferase</keyword>
<gene>
    <name evidence="1" type="primary">ispD</name>
    <name type="ordered locus">Syncc9902_1742</name>
</gene>
<dbReference type="EC" id="2.7.7.60" evidence="1"/>
<dbReference type="EMBL" id="CP000097">
    <property type="protein sequence ID" value="ABB26699.1"/>
    <property type="molecule type" value="Genomic_DNA"/>
</dbReference>
<dbReference type="RefSeq" id="WP_011360506.1">
    <property type="nucleotide sequence ID" value="NC_007513.1"/>
</dbReference>
<dbReference type="SMR" id="Q3AWK9"/>
<dbReference type="STRING" id="316279.Syncc9902_1742"/>
<dbReference type="KEGG" id="sye:Syncc9902_1742"/>
<dbReference type="eggNOG" id="COG1211">
    <property type="taxonomic scope" value="Bacteria"/>
</dbReference>
<dbReference type="HOGENOM" id="CLU_061281_1_0_3"/>
<dbReference type="OrthoDB" id="9806837at2"/>
<dbReference type="UniPathway" id="UPA00056">
    <property type="reaction ID" value="UER00093"/>
</dbReference>
<dbReference type="Proteomes" id="UP000002712">
    <property type="component" value="Chromosome"/>
</dbReference>
<dbReference type="GO" id="GO:0050518">
    <property type="term" value="F:2-C-methyl-D-erythritol 4-phosphate cytidylyltransferase activity"/>
    <property type="evidence" value="ECO:0007669"/>
    <property type="project" value="UniProtKB-UniRule"/>
</dbReference>
<dbReference type="GO" id="GO:0019288">
    <property type="term" value="P:isopentenyl diphosphate biosynthetic process, methylerythritol 4-phosphate pathway"/>
    <property type="evidence" value="ECO:0007669"/>
    <property type="project" value="UniProtKB-UniRule"/>
</dbReference>
<dbReference type="CDD" id="cd02516">
    <property type="entry name" value="CDP-ME_synthetase"/>
    <property type="match status" value="1"/>
</dbReference>
<dbReference type="FunFam" id="3.90.550.10:FF:000003">
    <property type="entry name" value="2-C-methyl-D-erythritol 4-phosphate cytidylyltransferase"/>
    <property type="match status" value="1"/>
</dbReference>
<dbReference type="Gene3D" id="3.90.550.10">
    <property type="entry name" value="Spore Coat Polysaccharide Biosynthesis Protein SpsA, Chain A"/>
    <property type="match status" value="1"/>
</dbReference>
<dbReference type="HAMAP" id="MF_00108">
    <property type="entry name" value="IspD"/>
    <property type="match status" value="1"/>
</dbReference>
<dbReference type="InterPro" id="IPR001228">
    <property type="entry name" value="IspD"/>
</dbReference>
<dbReference type="InterPro" id="IPR034683">
    <property type="entry name" value="IspD/TarI"/>
</dbReference>
<dbReference type="InterPro" id="IPR050088">
    <property type="entry name" value="IspD/TarI_cytidylyltransf_bact"/>
</dbReference>
<dbReference type="InterPro" id="IPR018294">
    <property type="entry name" value="ISPD_synthase_CS"/>
</dbReference>
<dbReference type="InterPro" id="IPR029044">
    <property type="entry name" value="Nucleotide-diphossugar_trans"/>
</dbReference>
<dbReference type="NCBIfam" id="TIGR00453">
    <property type="entry name" value="ispD"/>
    <property type="match status" value="1"/>
</dbReference>
<dbReference type="PANTHER" id="PTHR32125">
    <property type="entry name" value="2-C-METHYL-D-ERYTHRITOL 4-PHOSPHATE CYTIDYLYLTRANSFERASE, CHLOROPLASTIC"/>
    <property type="match status" value="1"/>
</dbReference>
<dbReference type="PANTHER" id="PTHR32125:SF4">
    <property type="entry name" value="2-C-METHYL-D-ERYTHRITOL 4-PHOSPHATE CYTIDYLYLTRANSFERASE, CHLOROPLASTIC"/>
    <property type="match status" value="1"/>
</dbReference>
<dbReference type="Pfam" id="PF01128">
    <property type="entry name" value="IspD"/>
    <property type="match status" value="1"/>
</dbReference>
<dbReference type="SUPFAM" id="SSF53448">
    <property type="entry name" value="Nucleotide-diphospho-sugar transferases"/>
    <property type="match status" value="1"/>
</dbReference>
<dbReference type="PROSITE" id="PS01295">
    <property type="entry name" value="ISPD"/>
    <property type="match status" value="1"/>
</dbReference>
<reference key="1">
    <citation type="submission" date="2005-08" db="EMBL/GenBank/DDBJ databases">
        <title>Complete sequence of Synechococcus sp. CC9902.</title>
        <authorList>
            <person name="Copeland A."/>
            <person name="Lucas S."/>
            <person name="Lapidus A."/>
            <person name="Barry K."/>
            <person name="Detter J.C."/>
            <person name="Glavina T."/>
            <person name="Hammon N."/>
            <person name="Israni S."/>
            <person name="Pitluck S."/>
            <person name="Martinez M."/>
            <person name="Schmutz J."/>
            <person name="Larimer F."/>
            <person name="Land M."/>
            <person name="Kyrpides N."/>
            <person name="Ivanova N."/>
            <person name="Richardson P."/>
        </authorList>
    </citation>
    <scope>NUCLEOTIDE SEQUENCE [LARGE SCALE GENOMIC DNA]</scope>
    <source>
        <strain>CC9902</strain>
    </source>
</reference>
<protein>
    <recommendedName>
        <fullName evidence="1">2-C-methyl-D-erythritol 4-phosphate cytidylyltransferase</fullName>
        <ecNumber evidence="1">2.7.7.60</ecNumber>
    </recommendedName>
    <alternativeName>
        <fullName evidence="1">4-diphosphocytidyl-2C-methyl-D-erythritol synthase</fullName>
    </alternativeName>
    <alternativeName>
        <fullName evidence="1">MEP cytidylyltransferase</fullName>
        <shortName evidence="1">MCT</shortName>
    </alternativeName>
</protein>
<organism>
    <name type="scientific">Synechococcus sp. (strain CC9902)</name>
    <dbReference type="NCBI Taxonomy" id="316279"/>
    <lineage>
        <taxon>Bacteria</taxon>
        <taxon>Bacillati</taxon>
        <taxon>Cyanobacteriota</taxon>
        <taxon>Cyanophyceae</taxon>
        <taxon>Synechococcales</taxon>
        <taxon>Synechococcaceae</taxon>
        <taxon>Synechococcus</taxon>
    </lineage>
</organism>
<feature type="chain" id="PRO_0000237829" description="2-C-methyl-D-erythritol 4-phosphate cytidylyltransferase">
    <location>
        <begin position="1"/>
        <end position="226"/>
    </location>
</feature>
<feature type="site" description="Transition state stabilizer" evidence="1">
    <location>
        <position position="13"/>
    </location>
</feature>
<feature type="site" description="Transition state stabilizer" evidence="1">
    <location>
        <position position="20"/>
    </location>
</feature>
<feature type="site" description="Positions MEP for the nucleophilic attack" evidence="1">
    <location>
        <position position="150"/>
    </location>
</feature>
<feature type="site" description="Positions MEP for the nucleophilic attack" evidence="1">
    <location>
        <position position="206"/>
    </location>
</feature>
<sequence>MHLLIAAAGSGRRMGADRNKLLLPLLGRPLIAWTVDAALTATEISWIGIVGQDIDRAEILDALGSVKKPLVWIQGGATRQESVLRGLAGLPEGARHVLIHDGARCLVQPDLFDRCAVAVEAGAALIAATPVTDTIKRVDEHGMIRDTPDRAELWAAQTPQGFEVEQLRQGHVRAQAEGWSVTDDASLFERLGWSVQVLDAGPSNIKVTTPFDLTVAEAVLSSRTTP</sequence>
<name>ISPD_SYNS9</name>
<proteinExistence type="inferred from homology"/>
<accession>Q3AWK9</accession>